<dbReference type="EC" id="3.1.2.6" evidence="1"/>
<dbReference type="EMBL" id="CP000089">
    <property type="protein sequence ID" value="AAZ46344.1"/>
    <property type="molecule type" value="Genomic_DNA"/>
</dbReference>
<dbReference type="SMR" id="Q47FN7"/>
<dbReference type="STRING" id="159087.Daro_1595"/>
<dbReference type="KEGG" id="dar:Daro_1595"/>
<dbReference type="eggNOG" id="COG0491">
    <property type="taxonomic scope" value="Bacteria"/>
</dbReference>
<dbReference type="HOGENOM" id="CLU_030571_4_1_4"/>
<dbReference type="OrthoDB" id="9802248at2"/>
<dbReference type="UniPathway" id="UPA00619">
    <property type="reaction ID" value="UER00676"/>
</dbReference>
<dbReference type="GO" id="GO:0004416">
    <property type="term" value="F:hydroxyacylglutathione hydrolase activity"/>
    <property type="evidence" value="ECO:0007669"/>
    <property type="project" value="UniProtKB-UniRule"/>
</dbReference>
<dbReference type="GO" id="GO:0046872">
    <property type="term" value="F:metal ion binding"/>
    <property type="evidence" value="ECO:0007669"/>
    <property type="project" value="UniProtKB-KW"/>
</dbReference>
<dbReference type="GO" id="GO:0019243">
    <property type="term" value="P:methylglyoxal catabolic process to D-lactate via S-lactoyl-glutathione"/>
    <property type="evidence" value="ECO:0007669"/>
    <property type="project" value="InterPro"/>
</dbReference>
<dbReference type="CDD" id="cd07723">
    <property type="entry name" value="hydroxyacylglutathione_hydrolase_MBL-fold"/>
    <property type="match status" value="1"/>
</dbReference>
<dbReference type="Gene3D" id="3.60.15.10">
    <property type="entry name" value="Ribonuclease Z/Hydroxyacylglutathione hydrolase-like"/>
    <property type="match status" value="1"/>
</dbReference>
<dbReference type="HAMAP" id="MF_01374">
    <property type="entry name" value="Glyoxalase_2"/>
    <property type="match status" value="1"/>
</dbReference>
<dbReference type="InterPro" id="IPR035680">
    <property type="entry name" value="Clx_II_MBL"/>
</dbReference>
<dbReference type="InterPro" id="IPR050110">
    <property type="entry name" value="Glyoxalase_II_hydrolase"/>
</dbReference>
<dbReference type="InterPro" id="IPR032282">
    <property type="entry name" value="HAGH_C"/>
</dbReference>
<dbReference type="InterPro" id="IPR017782">
    <property type="entry name" value="Hydroxyacylglutathione_Hdrlase"/>
</dbReference>
<dbReference type="InterPro" id="IPR001279">
    <property type="entry name" value="Metallo-B-lactamas"/>
</dbReference>
<dbReference type="InterPro" id="IPR036866">
    <property type="entry name" value="RibonucZ/Hydroxyglut_hydro"/>
</dbReference>
<dbReference type="NCBIfam" id="TIGR03413">
    <property type="entry name" value="GSH_gloB"/>
    <property type="match status" value="1"/>
</dbReference>
<dbReference type="PANTHER" id="PTHR43705">
    <property type="entry name" value="HYDROXYACYLGLUTATHIONE HYDROLASE"/>
    <property type="match status" value="1"/>
</dbReference>
<dbReference type="PANTHER" id="PTHR43705:SF1">
    <property type="entry name" value="HYDROXYACYLGLUTATHIONE HYDROLASE GLOB"/>
    <property type="match status" value="1"/>
</dbReference>
<dbReference type="Pfam" id="PF16123">
    <property type="entry name" value="HAGH_C"/>
    <property type="match status" value="1"/>
</dbReference>
<dbReference type="Pfam" id="PF00753">
    <property type="entry name" value="Lactamase_B"/>
    <property type="match status" value="1"/>
</dbReference>
<dbReference type="PIRSF" id="PIRSF005457">
    <property type="entry name" value="Glx"/>
    <property type="match status" value="1"/>
</dbReference>
<dbReference type="SMART" id="SM00849">
    <property type="entry name" value="Lactamase_B"/>
    <property type="match status" value="1"/>
</dbReference>
<dbReference type="SUPFAM" id="SSF56281">
    <property type="entry name" value="Metallo-hydrolase/oxidoreductase"/>
    <property type="match status" value="1"/>
</dbReference>
<proteinExistence type="inferred from homology"/>
<organism>
    <name type="scientific">Dechloromonas aromatica (strain RCB)</name>
    <dbReference type="NCBI Taxonomy" id="159087"/>
    <lineage>
        <taxon>Bacteria</taxon>
        <taxon>Pseudomonadati</taxon>
        <taxon>Pseudomonadota</taxon>
        <taxon>Betaproteobacteria</taxon>
        <taxon>Rhodocyclales</taxon>
        <taxon>Azonexaceae</taxon>
        <taxon>Dechloromonas</taxon>
    </lineage>
</organism>
<name>GLO2_DECAR</name>
<sequence>MLEISFIPAFKDNYIWLLTRGKRAFVVDPGDAAPVLARLEAGGLMLEGILITHHHADHQGGVAELKARWQAEVYAPGNESITGCSCPLSGGESIDVLGQKVTVMAVPGHTLGHLAYYAPGALLCGDTLFGAGCGRLFEGTPAQMSASLDSIAALPGDTLIYCAHEYTEMNLRFALAVEPNNQALQARVAKVAALRAAGLPSVPLILAEEKATNPFLRCHEAAVVEAGLQHAASCLLGHAAQQGADIEDRSKTAIFAAIRSWRNTF</sequence>
<protein>
    <recommendedName>
        <fullName evidence="1">Hydroxyacylglutathione hydrolase</fullName>
        <ecNumber evidence="1">3.1.2.6</ecNumber>
    </recommendedName>
    <alternativeName>
        <fullName evidence="1">Glyoxalase II</fullName>
        <shortName evidence="1">Glx II</shortName>
    </alternativeName>
</protein>
<comment type="function">
    <text evidence="1">Thiolesterase that catalyzes the hydrolysis of S-D-lactoyl-glutathione to form glutathione and D-lactic acid.</text>
</comment>
<comment type="catalytic activity">
    <reaction evidence="1">
        <text>an S-(2-hydroxyacyl)glutathione + H2O = a 2-hydroxy carboxylate + glutathione + H(+)</text>
        <dbReference type="Rhea" id="RHEA:21864"/>
        <dbReference type="ChEBI" id="CHEBI:15377"/>
        <dbReference type="ChEBI" id="CHEBI:15378"/>
        <dbReference type="ChEBI" id="CHEBI:57925"/>
        <dbReference type="ChEBI" id="CHEBI:58896"/>
        <dbReference type="ChEBI" id="CHEBI:71261"/>
        <dbReference type="EC" id="3.1.2.6"/>
    </reaction>
</comment>
<comment type="cofactor">
    <cofactor evidence="1">
        <name>Zn(2+)</name>
        <dbReference type="ChEBI" id="CHEBI:29105"/>
    </cofactor>
    <text evidence="1">Binds 2 Zn(2+) ions per subunit.</text>
</comment>
<comment type="pathway">
    <text evidence="1">Secondary metabolite metabolism; methylglyoxal degradation; (R)-lactate from methylglyoxal: step 2/2.</text>
</comment>
<comment type="subunit">
    <text evidence="1">Monomer.</text>
</comment>
<comment type="similarity">
    <text evidence="1">Belongs to the metallo-beta-lactamase superfamily. Glyoxalase II family.</text>
</comment>
<gene>
    <name evidence="1" type="primary">gloB</name>
    <name type="ordered locus">Daro_1595</name>
</gene>
<keyword id="KW-0378">Hydrolase</keyword>
<keyword id="KW-0479">Metal-binding</keyword>
<keyword id="KW-0862">Zinc</keyword>
<reference key="1">
    <citation type="journal article" date="2009" name="BMC Genomics">
        <title>Metabolic analysis of the soil microbe Dechloromonas aromatica str. RCB: indications of a surprisingly complex life-style and cryptic anaerobic pathways for aromatic degradation.</title>
        <authorList>
            <person name="Salinero K.K."/>
            <person name="Keller K."/>
            <person name="Feil W.S."/>
            <person name="Feil H."/>
            <person name="Trong S."/>
            <person name="Di Bartolo G."/>
            <person name="Lapidus A."/>
        </authorList>
    </citation>
    <scope>NUCLEOTIDE SEQUENCE [LARGE SCALE GENOMIC DNA]</scope>
    <source>
        <strain>RCB</strain>
    </source>
</reference>
<feature type="chain" id="PRO_1000144757" description="Hydroxyacylglutathione hydrolase">
    <location>
        <begin position="1"/>
        <end position="265"/>
    </location>
</feature>
<feature type="binding site" evidence="1">
    <location>
        <position position="53"/>
    </location>
    <ligand>
        <name>Zn(2+)</name>
        <dbReference type="ChEBI" id="CHEBI:29105"/>
        <label>1</label>
    </ligand>
</feature>
<feature type="binding site" evidence="1">
    <location>
        <position position="55"/>
    </location>
    <ligand>
        <name>Zn(2+)</name>
        <dbReference type="ChEBI" id="CHEBI:29105"/>
        <label>1</label>
    </ligand>
</feature>
<feature type="binding site" evidence="1">
    <location>
        <position position="57"/>
    </location>
    <ligand>
        <name>Zn(2+)</name>
        <dbReference type="ChEBI" id="CHEBI:29105"/>
        <label>2</label>
    </ligand>
</feature>
<feature type="binding site" evidence="1">
    <location>
        <position position="58"/>
    </location>
    <ligand>
        <name>Zn(2+)</name>
        <dbReference type="ChEBI" id="CHEBI:29105"/>
        <label>2</label>
    </ligand>
</feature>
<feature type="binding site" evidence="1">
    <location>
        <position position="109"/>
    </location>
    <ligand>
        <name>Zn(2+)</name>
        <dbReference type="ChEBI" id="CHEBI:29105"/>
        <label>1</label>
    </ligand>
</feature>
<feature type="binding site" evidence="1">
    <location>
        <position position="126"/>
    </location>
    <ligand>
        <name>Zn(2+)</name>
        <dbReference type="ChEBI" id="CHEBI:29105"/>
        <label>1</label>
    </ligand>
</feature>
<feature type="binding site" evidence="1">
    <location>
        <position position="126"/>
    </location>
    <ligand>
        <name>Zn(2+)</name>
        <dbReference type="ChEBI" id="CHEBI:29105"/>
        <label>2</label>
    </ligand>
</feature>
<feature type="binding site" evidence="1">
    <location>
        <position position="164"/>
    </location>
    <ligand>
        <name>Zn(2+)</name>
        <dbReference type="ChEBI" id="CHEBI:29105"/>
        <label>2</label>
    </ligand>
</feature>
<evidence type="ECO:0000255" key="1">
    <source>
        <dbReference type="HAMAP-Rule" id="MF_01374"/>
    </source>
</evidence>
<accession>Q47FN7</accession>